<organism>
    <name type="scientific">Escherichia coli O17:K52:H18 (strain UMN026 / ExPEC)</name>
    <dbReference type="NCBI Taxonomy" id="585056"/>
    <lineage>
        <taxon>Bacteria</taxon>
        <taxon>Pseudomonadati</taxon>
        <taxon>Pseudomonadota</taxon>
        <taxon>Gammaproteobacteria</taxon>
        <taxon>Enterobacterales</taxon>
        <taxon>Enterobacteriaceae</taxon>
        <taxon>Escherichia</taxon>
    </lineage>
</organism>
<protein>
    <recommendedName>
        <fullName evidence="1">3-methyl-2-oxobutanoate hydroxymethyltransferase</fullName>
        <ecNumber evidence="1">2.1.2.11</ecNumber>
    </recommendedName>
    <alternativeName>
        <fullName evidence="1">Ketopantoate hydroxymethyltransferase</fullName>
        <shortName evidence="1">KPHMT</shortName>
    </alternativeName>
</protein>
<comment type="function">
    <text evidence="1">Catalyzes the reversible reaction in which hydroxymethyl group from 5,10-methylenetetrahydrofolate is transferred onto alpha-ketoisovalerate to form ketopantoate.</text>
</comment>
<comment type="catalytic activity">
    <reaction evidence="1">
        <text>3-methyl-2-oxobutanoate + (6R)-5,10-methylene-5,6,7,8-tetrahydrofolate + H2O = 2-dehydropantoate + (6S)-5,6,7,8-tetrahydrofolate</text>
        <dbReference type="Rhea" id="RHEA:11824"/>
        <dbReference type="ChEBI" id="CHEBI:11561"/>
        <dbReference type="ChEBI" id="CHEBI:11851"/>
        <dbReference type="ChEBI" id="CHEBI:15377"/>
        <dbReference type="ChEBI" id="CHEBI:15636"/>
        <dbReference type="ChEBI" id="CHEBI:57453"/>
        <dbReference type="EC" id="2.1.2.11"/>
    </reaction>
</comment>
<comment type="cofactor">
    <cofactor evidence="1">
        <name>Mg(2+)</name>
        <dbReference type="ChEBI" id="CHEBI:18420"/>
    </cofactor>
    <text evidence="1">Binds 1 Mg(2+) ion per subunit.</text>
</comment>
<comment type="pathway">
    <text evidence="1">Cofactor biosynthesis; (R)-pantothenate biosynthesis; (R)-pantoate from 3-methyl-2-oxobutanoate: step 1/2.</text>
</comment>
<comment type="subunit">
    <text evidence="1">Homodecamer; pentamer of dimers.</text>
</comment>
<comment type="subcellular location">
    <subcellularLocation>
        <location evidence="1">Cytoplasm</location>
    </subcellularLocation>
</comment>
<comment type="similarity">
    <text evidence="1">Belongs to the PanB family.</text>
</comment>
<proteinExistence type="inferred from homology"/>
<sequence length="264" mass="28177">MKPTTIASLQKCKQEKKRFATITAYDYSFAKLFADEGLNVMLVGDSLGMTVQGHDSTLPVTVADIAYHTAAVRRGAPNCLLLADLPFMAYATPEQAFENAATVMRAGANMVKIEGGEWLVETVQMLTERAVPVCGHLGLTPQSVNIFGGYKVQGRGDEAADRLLSDALALEAAGAQLLVLECVPVELAKRITEALAIPVIGIGAGNVTDGQILVMHDAFGITGGHIPKFAKNFLAETGDIRAAVRQYMAEVESGVYPGEEHSFH</sequence>
<gene>
    <name evidence="1" type="primary">panB</name>
    <name type="ordered locus">ECUMN_0132</name>
</gene>
<feature type="chain" id="PRO_1000118125" description="3-methyl-2-oxobutanoate hydroxymethyltransferase">
    <location>
        <begin position="1"/>
        <end position="264"/>
    </location>
</feature>
<feature type="active site" description="Proton acceptor" evidence="1">
    <location>
        <position position="181"/>
    </location>
</feature>
<feature type="binding site" evidence="1">
    <location>
        <begin position="45"/>
        <end position="46"/>
    </location>
    <ligand>
        <name>3-methyl-2-oxobutanoate</name>
        <dbReference type="ChEBI" id="CHEBI:11851"/>
    </ligand>
</feature>
<feature type="binding site" evidence="1">
    <location>
        <position position="45"/>
    </location>
    <ligand>
        <name>Mg(2+)</name>
        <dbReference type="ChEBI" id="CHEBI:18420"/>
    </ligand>
</feature>
<feature type="binding site" evidence="1">
    <location>
        <position position="84"/>
    </location>
    <ligand>
        <name>3-methyl-2-oxobutanoate</name>
        <dbReference type="ChEBI" id="CHEBI:11851"/>
    </ligand>
</feature>
<feature type="binding site" evidence="1">
    <location>
        <position position="84"/>
    </location>
    <ligand>
        <name>Mg(2+)</name>
        <dbReference type="ChEBI" id="CHEBI:18420"/>
    </ligand>
</feature>
<feature type="binding site" evidence="1">
    <location>
        <position position="112"/>
    </location>
    <ligand>
        <name>3-methyl-2-oxobutanoate</name>
        <dbReference type="ChEBI" id="CHEBI:11851"/>
    </ligand>
</feature>
<feature type="binding site" evidence="1">
    <location>
        <position position="114"/>
    </location>
    <ligand>
        <name>Mg(2+)</name>
        <dbReference type="ChEBI" id="CHEBI:18420"/>
    </ligand>
</feature>
<reference key="1">
    <citation type="journal article" date="2009" name="PLoS Genet.">
        <title>Organised genome dynamics in the Escherichia coli species results in highly diverse adaptive paths.</title>
        <authorList>
            <person name="Touchon M."/>
            <person name="Hoede C."/>
            <person name="Tenaillon O."/>
            <person name="Barbe V."/>
            <person name="Baeriswyl S."/>
            <person name="Bidet P."/>
            <person name="Bingen E."/>
            <person name="Bonacorsi S."/>
            <person name="Bouchier C."/>
            <person name="Bouvet O."/>
            <person name="Calteau A."/>
            <person name="Chiapello H."/>
            <person name="Clermont O."/>
            <person name="Cruveiller S."/>
            <person name="Danchin A."/>
            <person name="Diard M."/>
            <person name="Dossat C."/>
            <person name="Karoui M.E."/>
            <person name="Frapy E."/>
            <person name="Garry L."/>
            <person name="Ghigo J.M."/>
            <person name="Gilles A.M."/>
            <person name="Johnson J."/>
            <person name="Le Bouguenec C."/>
            <person name="Lescat M."/>
            <person name="Mangenot S."/>
            <person name="Martinez-Jehanne V."/>
            <person name="Matic I."/>
            <person name="Nassif X."/>
            <person name="Oztas S."/>
            <person name="Petit M.A."/>
            <person name="Pichon C."/>
            <person name="Rouy Z."/>
            <person name="Ruf C.S."/>
            <person name="Schneider D."/>
            <person name="Tourret J."/>
            <person name="Vacherie B."/>
            <person name="Vallenet D."/>
            <person name="Medigue C."/>
            <person name="Rocha E.P.C."/>
            <person name="Denamur E."/>
        </authorList>
    </citation>
    <scope>NUCLEOTIDE SEQUENCE [LARGE SCALE GENOMIC DNA]</scope>
    <source>
        <strain>UMN026 / ExPEC</strain>
    </source>
</reference>
<keyword id="KW-0963">Cytoplasm</keyword>
<keyword id="KW-0460">Magnesium</keyword>
<keyword id="KW-0479">Metal-binding</keyword>
<keyword id="KW-0566">Pantothenate biosynthesis</keyword>
<keyword id="KW-0808">Transferase</keyword>
<dbReference type="EC" id="2.1.2.11" evidence="1"/>
<dbReference type="EMBL" id="CU928163">
    <property type="protein sequence ID" value="CAR11354.1"/>
    <property type="molecule type" value="Genomic_DNA"/>
</dbReference>
<dbReference type="RefSeq" id="WP_000805471.1">
    <property type="nucleotide sequence ID" value="NC_011751.1"/>
</dbReference>
<dbReference type="RefSeq" id="YP_002410910.1">
    <property type="nucleotide sequence ID" value="NC_011751.1"/>
</dbReference>
<dbReference type="SMR" id="B7N804"/>
<dbReference type="STRING" id="585056.ECUMN_0132"/>
<dbReference type="KEGG" id="eum:ECUMN_0132"/>
<dbReference type="PATRIC" id="fig|585056.7.peg.324"/>
<dbReference type="HOGENOM" id="CLU_036645_1_0_6"/>
<dbReference type="UniPathway" id="UPA00028">
    <property type="reaction ID" value="UER00003"/>
</dbReference>
<dbReference type="Proteomes" id="UP000007097">
    <property type="component" value="Chromosome"/>
</dbReference>
<dbReference type="GO" id="GO:0005737">
    <property type="term" value="C:cytoplasm"/>
    <property type="evidence" value="ECO:0007669"/>
    <property type="project" value="UniProtKB-SubCell"/>
</dbReference>
<dbReference type="GO" id="GO:0003864">
    <property type="term" value="F:3-methyl-2-oxobutanoate hydroxymethyltransferase activity"/>
    <property type="evidence" value="ECO:0007669"/>
    <property type="project" value="UniProtKB-UniRule"/>
</dbReference>
<dbReference type="GO" id="GO:0000287">
    <property type="term" value="F:magnesium ion binding"/>
    <property type="evidence" value="ECO:0007669"/>
    <property type="project" value="TreeGrafter"/>
</dbReference>
<dbReference type="GO" id="GO:0015940">
    <property type="term" value="P:pantothenate biosynthetic process"/>
    <property type="evidence" value="ECO:0007669"/>
    <property type="project" value="UniProtKB-UniRule"/>
</dbReference>
<dbReference type="CDD" id="cd06557">
    <property type="entry name" value="KPHMT-like"/>
    <property type="match status" value="1"/>
</dbReference>
<dbReference type="FunFam" id="3.20.20.60:FF:000003">
    <property type="entry name" value="3-methyl-2-oxobutanoate hydroxymethyltransferase"/>
    <property type="match status" value="1"/>
</dbReference>
<dbReference type="Gene3D" id="3.20.20.60">
    <property type="entry name" value="Phosphoenolpyruvate-binding domains"/>
    <property type="match status" value="1"/>
</dbReference>
<dbReference type="HAMAP" id="MF_00156">
    <property type="entry name" value="PanB"/>
    <property type="match status" value="1"/>
</dbReference>
<dbReference type="InterPro" id="IPR003700">
    <property type="entry name" value="Pantoate_hydroxy_MeTrfase"/>
</dbReference>
<dbReference type="InterPro" id="IPR015813">
    <property type="entry name" value="Pyrv/PenolPyrv_kinase-like_dom"/>
</dbReference>
<dbReference type="InterPro" id="IPR040442">
    <property type="entry name" value="Pyrv_kinase-like_dom_sf"/>
</dbReference>
<dbReference type="NCBIfam" id="TIGR00222">
    <property type="entry name" value="panB"/>
    <property type="match status" value="1"/>
</dbReference>
<dbReference type="NCBIfam" id="NF001452">
    <property type="entry name" value="PRK00311.1"/>
    <property type="match status" value="1"/>
</dbReference>
<dbReference type="PANTHER" id="PTHR20881">
    <property type="entry name" value="3-METHYL-2-OXOBUTANOATE HYDROXYMETHYLTRANSFERASE"/>
    <property type="match status" value="1"/>
</dbReference>
<dbReference type="PANTHER" id="PTHR20881:SF0">
    <property type="entry name" value="3-METHYL-2-OXOBUTANOATE HYDROXYMETHYLTRANSFERASE"/>
    <property type="match status" value="1"/>
</dbReference>
<dbReference type="Pfam" id="PF02548">
    <property type="entry name" value="Pantoate_transf"/>
    <property type="match status" value="1"/>
</dbReference>
<dbReference type="PIRSF" id="PIRSF000388">
    <property type="entry name" value="Pantoate_hydroxy_MeTrfase"/>
    <property type="match status" value="1"/>
</dbReference>
<dbReference type="SUPFAM" id="SSF51621">
    <property type="entry name" value="Phosphoenolpyruvate/pyruvate domain"/>
    <property type="match status" value="1"/>
</dbReference>
<accession>B7N804</accession>
<name>PANB_ECOLU</name>
<evidence type="ECO:0000255" key="1">
    <source>
        <dbReference type="HAMAP-Rule" id="MF_00156"/>
    </source>
</evidence>